<gene>
    <name type="primary">SUB2</name>
    <name type="ordered locus">ADR260C</name>
</gene>
<feature type="chain" id="PRO_0000227961" description="ATP-dependent RNA helicase SUB2">
    <location>
        <begin position="1"/>
        <end position="438"/>
    </location>
</feature>
<feature type="domain" description="Helicase ATP-binding" evidence="2">
    <location>
        <begin position="85"/>
        <end position="260"/>
    </location>
</feature>
<feature type="domain" description="Helicase C-terminal" evidence="3">
    <location>
        <begin position="272"/>
        <end position="433"/>
    </location>
</feature>
<feature type="region of interest" description="Disordered" evidence="4">
    <location>
        <begin position="1"/>
        <end position="44"/>
    </location>
</feature>
<feature type="short sequence motif" description="Q motif">
    <location>
        <begin position="54"/>
        <end position="82"/>
    </location>
</feature>
<feature type="short sequence motif" description="DECD box">
    <location>
        <begin position="207"/>
        <end position="210"/>
    </location>
</feature>
<feature type="compositionally biased region" description="Acidic residues" evidence="4">
    <location>
        <begin position="1"/>
        <end position="19"/>
    </location>
</feature>
<feature type="binding site" evidence="2">
    <location>
        <begin position="98"/>
        <end position="105"/>
    </location>
    <ligand>
        <name>ATP</name>
        <dbReference type="ChEBI" id="CHEBI:30616"/>
    </ligand>
</feature>
<organism>
    <name type="scientific">Eremothecium gossypii (strain ATCC 10895 / CBS 109.51 / FGSC 9923 / NRRL Y-1056)</name>
    <name type="common">Yeast</name>
    <name type="synonym">Ashbya gossypii</name>
    <dbReference type="NCBI Taxonomy" id="284811"/>
    <lineage>
        <taxon>Eukaryota</taxon>
        <taxon>Fungi</taxon>
        <taxon>Dikarya</taxon>
        <taxon>Ascomycota</taxon>
        <taxon>Saccharomycotina</taxon>
        <taxon>Saccharomycetes</taxon>
        <taxon>Saccharomycetales</taxon>
        <taxon>Saccharomycetaceae</taxon>
        <taxon>Eremothecium</taxon>
    </lineage>
</organism>
<proteinExistence type="inferred from homology"/>
<name>SUB2_EREGS</name>
<protein>
    <recommendedName>
        <fullName>ATP-dependent RNA helicase SUB2</fullName>
        <ecNumber>3.6.4.13</ecNumber>
    </recommendedName>
</protein>
<accession>Q759L6</accession>
<evidence type="ECO:0000250" key="1"/>
<evidence type="ECO:0000255" key="2">
    <source>
        <dbReference type="PROSITE-ProRule" id="PRU00541"/>
    </source>
</evidence>
<evidence type="ECO:0000255" key="3">
    <source>
        <dbReference type="PROSITE-ProRule" id="PRU00542"/>
    </source>
</evidence>
<evidence type="ECO:0000256" key="4">
    <source>
        <dbReference type="SAM" id="MobiDB-lite"/>
    </source>
</evidence>
<evidence type="ECO:0000305" key="5"/>
<sequence length="438" mass="49743">MSHEGEEDLLEYSDNEQEIQVDNTKATEVAGNGEEAADGKDGDKKGSYVGIHSTGFKDFLLKPELSRAIIDCGFEHPSEVQQHTIPQSIHGTDVLCQAKSGLGKTAVFVLSTLQQLDPVPGEVSVVVLCNARELAYQIRNEYLRFSKYMPDVKTAVFYGGTDTRKDIELLKNKDTAPHIVVATPGRLKALVRDNNIDLSHVKNFVIDECDKVLEELDMRRDVQDIFRATPRDKQVMMFSATLSQEIRPICRRFLQNPLEIFVDDEAKLTLHGLQQYYIRLEEREKNRKLAQLLDDLEFNQVIIFVKSTLRANELTKLLNASNFPAITVHGHMRQEERIARYKAFKEFEKRICVSTDVFGRGIDIERINLAINYDMPSEADQYLHRVGRAGRFGTKGLAISLVSSKDDEEVLAKIQERFDVKITEFPEEGVDPSTYLNT</sequence>
<keyword id="KW-0067">ATP-binding</keyword>
<keyword id="KW-0347">Helicase</keyword>
<keyword id="KW-0378">Hydrolase</keyword>
<keyword id="KW-0507">mRNA processing</keyword>
<keyword id="KW-0508">mRNA splicing</keyword>
<keyword id="KW-0509">mRNA transport</keyword>
<keyword id="KW-0547">Nucleotide-binding</keyword>
<keyword id="KW-0539">Nucleus</keyword>
<keyword id="KW-1185">Reference proteome</keyword>
<keyword id="KW-0694">RNA-binding</keyword>
<keyword id="KW-0747">Spliceosome</keyword>
<keyword id="KW-0813">Transport</keyword>
<dbReference type="EC" id="3.6.4.13"/>
<dbReference type="EMBL" id="AE016817">
    <property type="protein sequence ID" value="AAS52180.1"/>
    <property type="molecule type" value="Genomic_DNA"/>
</dbReference>
<dbReference type="RefSeq" id="NP_984356.1">
    <property type="nucleotide sequence ID" value="NM_209709.1"/>
</dbReference>
<dbReference type="SMR" id="Q759L6"/>
<dbReference type="FunCoup" id="Q759L6">
    <property type="interactions" value="1355"/>
</dbReference>
<dbReference type="STRING" id="284811.Q759L6"/>
<dbReference type="EnsemblFungi" id="AAS52180">
    <property type="protein sequence ID" value="AAS52180"/>
    <property type="gene ID" value="AGOS_ADR260C"/>
</dbReference>
<dbReference type="GeneID" id="4620518"/>
<dbReference type="KEGG" id="ago:AGOS_ADR260C"/>
<dbReference type="eggNOG" id="KOG0329">
    <property type="taxonomic scope" value="Eukaryota"/>
</dbReference>
<dbReference type="HOGENOM" id="CLU_003041_1_0_1"/>
<dbReference type="InParanoid" id="Q759L6"/>
<dbReference type="OMA" id="YAHVEPK"/>
<dbReference type="OrthoDB" id="10265785at2759"/>
<dbReference type="Proteomes" id="UP000000591">
    <property type="component" value="Chromosome IV"/>
</dbReference>
<dbReference type="GO" id="GO:0005681">
    <property type="term" value="C:spliceosomal complex"/>
    <property type="evidence" value="ECO:0007669"/>
    <property type="project" value="UniProtKB-KW"/>
</dbReference>
<dbReference type="GO" id="GO:0005524">
    <property type="term" value="F:ATP binding"/>
    <property type="evidence" value="ECO:0007669"/>
    <property type="project" value="UniProtKB-KW"/>
</dbReference>
<dbReference type="GO" id="GO:0016887">
    <property type="term" value="F:ATP hydrolysis activity"/>
    <property type="evidence" value="ECO:0007669"/>
    <property type="project" value="RHEA"/>
</dbReference>
<dbReference type="GO" id="GO:0003729">
    <property type="term" value="F:mRNA binding"/>
    <property type="evidence" value="ECO:0000318"/>
    <property type="project" value="GO_Central"/>
</dbReference>
<dbReference type="GO" id="GO:0003724">
    <property type="term" value="F:RNA helicase activity"/>
    <property type="evidence" value="ECO:0000318"/>
    <property type="project" value="GO_Central"/>
</dbReference>
<dbReference type="GO" id="GO:0006406">
    <property type="term" value="P:mRNA export from nucleus"/>
    <property type="evidence" value="ECO:0000318"/>
    <property type="project" value="GO_Central"/>
</dbReference>
<dbReference type="GO" id="GO:0000398">
    <property type="term" value="P:mRNA splicing, via spliceosome"/>
    <property type="evidence" value="ECO:0000318"/>
    <property type="project" value="GO_Central"/>
</dbReference>
<dbReference type="CDD" id="cd17950">
    <property type="entry name" value="DEADc_DDX39"/>
    <property type="match status" value="1"/>
</dbReference>
<dbReference type="CDD" id="cd18787">
    <property type="entry name" value="SF2_C_DEAD"/>
    <property type="match status" value="1"/>
</dbReference>
<dbReference type="FunFam" id="3.40.50.300:FF:000809">
    <property type="entry name" value="ATP-dependent RNA helicase SUB2"/>
    <property type="match status" value="1"/>
</dbReference>
<dbReference type="FunFam" id="3.40.50.300:FF:000111">
    <property type="entry name" value="DEAD-box ATP-dependent RNA helicase"/>
    <property type="match status" value="1"/>
</dbReference>
<dbReference type="Gene3D" id="3.40.50.300">
    <property type="entry name" value="P-loop containing nucleotide triphosphate hydrolases"/>
    <property type="match status" value="2"/>
</dbReference>
<dbReference type="InterPro" id="IPR011545">
    <property type="entry name" value="DEAD/DEAH_box_helicase_dom"/>
</dbReference>
<dbReference type="InterPro" id="IPR014001">
    <property type="entry name" value="Helicase_ATP-bd"/>
</dbReference>
<dbReference type="InterPro" id="IPR001650">
    <property type="entry name" value="Helicase_C-like"/>
</dbReference>
<dbReference type="InterPro" id="IPR027417">
    <property type="entry name" value="P-loop_NTPase"/>
</dbReference>
<dbReference type="InterPro" id="IPR014014">
    <property type="entry name" value="RNA_helicase_DEAD_Q_motif"/>
</dbReference>
<dbReference type="PANTHER" id="PTHR47958">
    <property type="entry name" value="ATP-DEPENDENT RNA HELICASE DBP3"/>
    <property type="match status" value="1"/>
</dbReference>
<dbReference type="Pfam" id="PF00270">
    <property type="entry name" value="DEAD"/>
    <property type="match status" value="1"/>
</dbReference>
<dbReference type="Pfam" id="PF00271">
    <property type="entry name" value="Helicase_C"/>
    <property type="match status" value="1"/>
</dbReference>
<dbReference type="SMART" id="SM00487">
    <property type="entry name" value="DEXDc"/>
    <property type="match status" value="1"/>
</dbReference>
<dbReference type="SMART" id="SM00490">
    <property type="entry name" value="HELICc"/>
    <property type="match status" value="1"/>
</dbReference>
<dbReference type="SUPFAM" id="SSF52540">
    <property type="entry name" value="P-loop containing nucleoside triphosphate hydrolases"/>
    <property type="match status" value="1"/>
</dbReference>
<dbReference type="PROSITE" id="PS51192">
    <property type="entry name" value="HELICASE_ATP_BIND_1"/>
    <property type="match status" value="1"/>
</dbReference>
<dbReference type="PROSITE" id="PS51194">
    <property type="entry name" value="HELICASE_CTER"/>
    <property type="match status" value="1"/>
</dbReference>
<dbReference type="PROSITE" id="PS51195">
    <property type="entry name" value="Q_MOTIF"/>
    <property type="match status" value="1"/>
</dbReference>
<comment type="function">
    <text evidence="1">ATP-binding RNA helicase involved in transcription elongation and required for the export of mRNA out of the nucleus. SUB2 also plays a role in pre-mRNA splicing and spliceosome assembly. May be involved in rDNA and telomeric silencing, and maintenance of genome integrity (By similarity).</text>
</comment>
<comment type="catalytic activity">
    <reaction>
        <text>ATP + H2O = ADP + phosphate + H(+)</text>
        <dbReference type="Rhea" id="RHEA:13065"/>
        <dbReference type="ChEBI" id="CHEBI:15377"/>
        <dbReference type="ChEBI" id="CHEBI:15378"/>
        <dbReference type="ChEBI" id="CHEBI:30616"/>
        <dbReference type="ChEBI" id="CHEBI:43474"/>
        <dbReference type="ChEBI" id="CHEBI:456216"/>
        <dbReference type="EC" id="3.6.4.13"/>
    </reaction>
</comment>
<comment type="subcellular location">
    <subcellularLocation>
        <location evidence="1">Nucleus</location>
    </subcellularLocation>
</comment>
<comment type="domain">
    <text>The Q motif is unique to and characteristic of the DEAD box family of RNA helicases and controls ATP binding and hydrolysis.</text>
</comment>
<comment type="similarity">
    <text evidence="5">Belongs to the DEAD box helicase family. DECD subfamily.</text>
</comment>
<reference key="1">
    <citation type="journal article" date="2004" name="Science">
        <title>The Ashbya gossypii genome as a tool for mapping the ancient Saccharomyces cerevisiae genome.</title>
        <authorList>
            <person name="Dietrich F.S."/>
            <person name="Voegeli S."/>
            <person name="Brachat S."/>
            <person name="Lerch A."/>
            <person name="Gates K."/>
            <person name="Steiner S."/>
            <person name="Mohr C."/>
            <person name="Poehlmann R."/>
            <person name="Luedi P."/>
            <person name="Choi S."/>
            <person name="Wing R.A."/>
            <person name="Flavier A."/>
            <person name="Gaffney T.D."/>
            <person name="Philippsen P."/>
        </authorList>
    </citation>
    <scope>NUCLEOTIDE SEQUENCE [LARGE SCALE GENOMIC DNA]</scope>
    <source>
        <strain>ATCC 10895 / CBS 109.51 / FGSC 9923 / NRRL Y-1056</strain>
    </source>
</reference>
<reference key="2">
    <citation type="journal article" date="2013" name="G3 (Bethesda)">
        <title>Genomes of Ashbya fungi isolated from insects reveal four mating-type loci, numerous translocations, lack of transposons, and distinct gene duplications.</title>
        <authorList>
            <person name="Dietrich F.S."/>
            <person name="Voegeli S."/>
            <person name="Kuo S."/>
            <person name="Philippsen P."/>
        </authorList>
    </citation>
    <scope>GENOME REANNOTATION</scope>
    <source>
        <strain>ATCC 10895 / CBS 109.51 / FGSC 9923 / NRRL Y-1056</strain>
    </source>
</reference>